<sequence length="320" mass="33356">MARKKIALIGAGNIGGTLAHLAAQKELGDIVLFDVVEGVPQGKALDLSQCGPVEGFDANIIGTNDYKGIAGADVIIVTAGVARKPGMSRDDLLGINLKVMKAVGEGIRDNAPDAFVICITNPLDAMVWALREFSGLPANKVVGMAGVLDSARFSTFLAWEFGVSIRDVNTFVLGGHGDTMVPVTQYSTVNGIPVPDLVKMGLSTQEKIDAIVQRTRSGGGEIVGLLKTGSAFYAPAASGIAMAEAYLNDQKRILPCAAYVDGEYGVNGLYVGVPVLIGANGVEKVIEIELDDEAKGNLQVSVDAVKELLEACKGIDPSLA</sequence>
<accession>Q2G946</accession>
<evidence type="ECO:0000255" key="1">
    <source>
        <dbReference type="HAMAP-Rule" id="MF_00487"/>
    </source>
</evidence>
<protein>
    <recommendedName>
        <fullName evidence="1">Malate dehydrogenase</fullName>
        <ecNumber evidence="1">1.1.1.37</ecNumber>
    </recommendedName>
</protein>
<reference key="1">
    <citation type="submission" date="2006-01" db="EMBL/GenBank/DDBJ databases">
        <title>Complete sequence of Novosphingobium aromaticivorans DSM 12444.</title>
        <authorList>
            <consortium name="US DOE Joint Genome Institute"/>
            <person name="Copeland A."/>
            <person name="Lucas S."/>
            <person name="Lapidus A."/>
            <person name="Barry K."/>
            <person name="Detter J.C."/>
            <person name="Glavina T."/>
            <person name="Hammon N."/>
            <person name="Israni S."/>
            <person name="Pitluck S."/>
            <person name="Chain P."/>
            <person name="Malfatti S."/>
            <person name="Shin M."/>
            <person name="Vergez L."/>
            <person name="Schmutz J."/>
            <person name="Larimer F."/>
            <person name="Land M."/>
            <person name="Kyrpides N."/>
            <person name="Ivanova N."/>
            <person name="Fredrickson J."/>
            <person name="Balkwill D."/>
            <person name="Romine M.F."/>
            <person name="Richardson P."/>
        </authorList>
    </citation>
    <scope>NUCLEOTIDE SEQUENCE [LARGE SCALE GENOMIC DNA]</scope>
    <source>
        <strain>ATCC 700278 / DSM 12444 / CCUG 56034 / CIP 105152 / NBRC 16084 / F199</strain>
    </source>
</reference>
<dbReference type="EC" id="1.1.1.37" evidence="1"/>
<dbReference type="EMBL" id="CP000248">
    <property type="protein sequence ID" value="ABD25627.1"/>
    <property type="molecule type" value="Genomic_DNA"/>
</dbReference>
<dbReference type="RefSeq" id="WP_011444841.1">
    <property type="nucleotide sequence ID" value="NC_007794.1"/>
</dbReference>
<dbReference type="SMR" id="Q2G946"/>
<dbReference type="STRING" id="279238.Saro_1182"/>
<dbReference type="KEGG" id="nar:Saro_1182"/>
<dbReference type="eggNOG" id="COG0039">
    <property type="taxonomic scope" value="Bacteria"/>
</dbReference>
<dbReference type="HOGENOM" id="CLU_045401_2_1_5"/>
<dbReference type="Proteomes" id="UP000009134">
    <property type="component" value="Chromosome"/>
</dbReference>
<dbReference type="GO" id="GO:0004459">
    <property type="term" value="F:L-lactate dehydrogenase activity"/>
    <property type="evidence" value="ECO:0007669"/>
    <property type="project" value="TreeGrafter"/>
</dbReference>
<dbReference type="GO" id="GO:0030060">
    <property type="term" value="F:L-malate dehydrogenase (NAD+) activity"/>
    <property type="evidence" value="ECO:0007669"/>
    <property type="project" value="UniProtKB-UniRule"/>
</dbReference>
<dbReference type="GO" id="GO:0006089">
    <property type="term" value="P:lactate metabolic process"/>
    <property type="evidence" value="ECO:0007669"/>
    <property type="project" value="TreeGrafter"/>
</dbReference>
<dbReference type="GO" id="GO:0006099">
    <property type="term" value="P:tricarboxylic acid cycle"/>
    <property type="evidence" value="ECO:0007669"/>
    <property type="project" value="UniProtKB-UniRule"/>
</dbReference>
<dbReference type="CDD" id="cd01339">
    <property type="entry name" value="LDH-like_MDH"/>
    <property type="match status" value="1"/>
</dbReference>
<dbReference type="FunFam" id="3.40.50.720:FF:000018">
    <property type="entry name" value="Malate dehydrogenase"/>
    <property type="match status" value="1"/>
</dbReference>
<dbReference type="FunFam" id="3.90.110.10:FF:000004">
    <property type="entry name" value="Malate dehydrogenase"/>
    <property type="match status" value="1"/>
</dbReference>
<dbReference type="Gene3D" id="3.90.110.10">
    <property type="entry name" value="Lactate dehydrogenase/glycoside hydrolase, family 4, C-terminal"/>
    <property type="match status" value="1"/>
</dbReference>
<dbReference type="Gene3D" id="3.40.50.720">
    <property type="entry name" value="NAD(P)-binding Rossmann-like Domain"/>
    <property type="match status" value="1"/>
</dbReference>
<dbReference type="HAMAP" id="MF_00487">
    <property type="entry name" value="Malate_dehydrog_3"/>
    <property type="match status" value="1"/>
</dbReference>
<dbReference type="InterPro" id="IPR001557">
    <property type="entry name" value="L-lactate/malate_DH"/>
</dbReference>
<dbReference type="InterPro" id="IPR022383">
    <property type="entry name" value="Lactate/malate_DH_C"/>
</dbReference>
<dbReference type="InterPro" id="IPR001236">
    <property type="entry name" value="Lactate/malate_DH_N"/>
</dbReference>
<dbReference type="InterPro" id="IPR015955">
    <property type="entry name" value="Lactate_DH/Glyco_Ohase_4_C"/>
</dbReference>
<dbReference type="InterPro" id="IPR011275">
    <property type="entry name" value="Malate_DH_type3"/>
</dbReference>
<dbReference type="InterPro" id="IPR036291">
    <property type="entry name" value="NAD(P)-bd_dom_sf"/>
</dbReference>
<dbReference type="NCBIfam" id="TIGR01763">
    <property type="entry name" value="MalateDH_bact"/>
    <property type="match status" value="1"/>
</dbReference>
<dbReference type="NCBIfam" id="NF004863">
    <property type="entry name" value="PRK06223.1"/>
    <property type="match status" value="1"/>
</dbReference>
<dbReference type="PANTHER" id="PTHR43128">
    <property type="entry name" value="L-2-HYDROXYCARBOXYLATE DEHYDROGENASE (NAD(P)(+))"/>
    <property type="match status" value="1"/>
</dbReference>
<dbReference type="PANTHER" id="PTHR43128:SF16">
    <property type="entry name" value="L-LACTATE DEHYDROGENASE"/>
    <property type="match status" value="1"/>
</dbReference>
<dbReference type="Pfam" id="PF02866">
    <property type="entry name" value="Ldh_1_C"/>
    <property type="match status" value="1"/>
</dbReference>
<dbReference type="Pfam" id="PF00056">
    <property type="entry name" value="Ldh_1_N"/>
    <property type="match status" value="1"/>
</dbReference>
<dbReference type="PIRSF" id="PIRSF000102">
    <property type="entry name" value="Lac_mal_DH"/>
    <property type="match status" value="1"/>
</dbReference>
<dbReference type="PRINTS" id="PR00086">
    <property type="entry name" value="LLDHDRGNASE"/>
</dbReference>
<dbReference type="SUPFAM" id="SSF56327">
    <property type="entry name" value="LDH C-terminal domain-like"/>
    <property type="match status" value="1"/>
</dbReference>
<dbReference type="SUPFAM" id="SSF51735">
    <property type="entry name" value="NAD(P)-binding Rossmann-fold domains"/>
    <property type="match status" value="1"/>
</dbReference>
<proteinExistence type="inferred from homology"/>
<gene>
    <name evidence="1" type="primary">mdh</name>
    <name type="ordered locus">Saro_1182</name>
</gene>
<name>MDH_NOVAD</name>
<keyword id="KW-0520">NAD</keyword>
<keyword id="KW-0560">Oxidoreductase</keyword>
<keyword id="KW-1185">Reference proteome</keyword>
<keyword id="KW-0816">Tricarboxylic acid cycle</keyword>
<feature type="chain" id="PRO_0000241956" description="Malate dehydrogenase">
    <location>
        <begin position="1"/>
        <end position="320"/>
    </location>
</feature>
<feature type="active site" description="Proton acceptor" evidence="1">
    <location>
        <position position="176"/>
    </location>
</feature>
<feature type="binding site" evidence="1">
    <location>
        <begin position="10"/>
        <end position="15"/>
    </location>
    <ligand>
        <name>NAD(+)</name>
        <dbReference type="ChEBI" id="CHEBI:57540"/>
    </ligand>
</feature>
<feature type="binding site" evidence="1">
    <location>
        <position position="34"/>
    </location>
    <ligand>
        <name>NAD(+)</name>
        <dbReference type="ChEBI" id="CHEBI:57540"/>
    </ligand>
</feature>
<feature type="binding site" evidence="1">
    <location>
        <position position="83"/>
    </location>
    <ligand>
        <name>substrate</name>
    </ligand>
</feature>
<feature type="binding site" evidence="1">
    <location>
        <position position="89"/>
    </location>
    <ligand>
        <name>substrate</name>
    </ligand>
</feature>
<feature type="binding site" evidence="1">
    <location>
        <position position="96"/>
    </location>
    <ligand>
        <name>NAD(+)</name>
        <dbReference type="ChEBI" id="CHEBI:57540"/>
    </ligand>
</feature>
<feature type="binding site" evidence="1">
    <location>
        <begin position="119"/>
        <end position="121"/>
    </location>
    <ligand>
        <name>NAD(+)</name>
        <dbReference type="ChEBI" id="CHEBI:57540"/>
    </ligand>
</feature>
<feature type="binding site" evidence="1">
    <location>
        <position position="121"/>
    </location>
    <ligand>
        <name>substrate</name>
    </ligand>
</feature>
<feature type="binding site" evidence="1">
    <location>
        <position position="152"/>
    </location>
    <ligand>
        <name>substrate</name>
    </ligand>
</feature>
<comment type="function">
    <text evidence="1">Catalyzes the reversible oxidation of malate to oxaloacetate.</text>
</comment>
<comment type="catalytic activity">
    <reaction evidence="1">
        <text>(S)-malate + NAD(+) = oxaloacetate + NADH + H(+)</text>
        <dbReference type="Rhea" id="RHEA:21432"/>
        <dbReference type="ChEBI" id="CHEBI:15378"/>
        <dbReference type="ChEBI" id="CHEBI:15589"/>
        <dbReference type="ChEBI" id="CHEBI:16452"/>
        <dbReference type="ChEBI" id="CHEBI:57540"/>
        <dbReference type="ChEBI" id="CHEBI:57945"/>
        <dbReference type="EC" id="1.1.1.37"/>
    </reaction>
</comment>
<comment type="similarity">
    <text evidence="1">Belongs to the LDH/MDH superfamily. MDH type 3 family.</text>
</comment>
<organism>
    <name type="scientific">Novosphingobium aromaticivorans (strain ATCC 700278 / DSM 12444 / CCUG 56034 / CIP 105152 / NBRC 16084 / F199)</name>
    <dbReference type="NCBI Taxonomy" id="279238"/>
    <lineage>
        <taxon>Bacteria</taxon>
        <taxon>Pseudomonadati</taxon>
        <taxon>Pseudomonadota</taxon>
        <taxon>Alphaproteobacteria</taxon>
        <taxon>Sphingomonadales</taxon>
        <taxon>Sphingomonadaceae</taxon>
        <taxon>Novosphingobium</taxon>
    </lineage>
</organism>